<dbReference type="EC" id="3.6.1.66" evidence="1"/>
<dbReference type="EMBL" id="CP017627">
    <property type="protein sequence ID" value="AOW29796.1"/>
    <property type="molecule type" value="Genomic_DNA"/>
</dbReference>
<dbReference type="RefSeq" id="XP_711160.1">
    <property type="nucleotide sequence ID" value="XM_706068.1"/>
</dbReference>
<dbReference type="SMR" id="Q59N80"/>
<dbReference type="BioGRID" id="1230305">
    <property type="interactions" value="1"/>
</dbReference>
<dbReference type="FunCoup" id="Q59N80">
    <property type="interactions" value="774"/>
</dbReference>
<dbReference type="STRING" id="237561.Q59N80"/>
<dbReference type="EnsemblFungi" id="C5_03860W_A-T">
    <property type="protein sequence ID" value="C5_03860W_A-T-p1"/>
    <property type="gene ID" value="C5_03860W_A"/>
</dbReference>
<dbReference type="GeneID" id="3647224"/>
<dbReference type="KEGG" id="cal:CAALFM_C503860WA"/>
<dbReference type="CGD" id="CAL0000174774">
    <property type="gene designation" value="HAM1"/>
</dbReference>
<dbReference type="VEuPathDB" id="FungiDB:C5_03860W_A"/>
<dbReference type="eggNOG" id="KOG3222">
    <property type="taxonomic scope" value="Eukaryota"/>
</dbReference>
<dbReference type="HOGENOM" id="CLU_082080_1_1_1"/>
<dbReference type="InParanoid" id="Q59N80"/>
<dbReference type="OMA" id="YDPIFQP"/>
<dbReference type="OrthoDB" id="6288734at2759"/>
<dbReference type="PRO" id="PR:Q59N80"/>
<dbReference type="Proteomes" id="UP000000559">
    <property type="component" value="Chromosome 5"/>
</dbReference>
<dbReference type="GO" id="GO:0005737">
    <property type="term" value="C:cytoplasm"/>
    <property type="evidence" value="ECO:0000318"/>
    <property type="project" value="GO_Central"/>
</dbReference>
<dbReference type="GO" id="GO:0005634">
    <property type="term" value="C:nucleus"/>
    <property type="evidence" value="ECO:0007669"/>
    <property type="project" value="UniProtKB-SubCell"/>
</dbReference>
<dbReference type="GO" id="GO:0035870">
    <property type="term" value="F:dITP diphosphatase activity"/>
    <property type="evidence" value="ECO:0007669"/>
    <property type="project" value="RHEA"/>
</dbReference>
<dbReference type="GO" id="GO:0036220">
    <property type="term" value="F:ITP diphosphatase activity"/>
    <property type="evidence" value="ECO:0007669"/>
    <property type="project" value="RHEA"/>
</dbReference>
<dbReference type="GO" id="GO:0046872">
    <property type="term" value="F:metal ion binding"/>
    <property type="evidence" value="ECO:0007669"/>
    <property type="project" value="UniProtKB-KW"/>
</dbReference>
<dbReference type="GO" id="GO:0047429">
    <property type="term" value="F:nucleoside triphosphate diphosphatase activity"/>
    <property type="evidence" value="ECO:0000318"/>
    <property type="project" value="GO_Central"/>
</dbReference>
<dbReference type="GO" id="GO:0000166">
    <property type="term" value="F:nucleotide binding"/>
    <property type="evidence" value="ECO:0007669"/>
    <property type="project" value="UniProtKB-KW"/>
</dbReference>
<dbReference type="GO" id="GO:0036222">
    <property type="term" value="F:XTP diphosphatase activity"/>
    <property type="evidence" value="ECO:0007669"/>
    <property type="project" value="RHEA"/>
</dbReference>
<dbReference type="GO" id="GO:0009204">
    <property type="term" value="P:deoxyribonucleoside triphosphate catabolic process"/>
    <property type="evidence" value="ECO:0007669"/>
    <property type="project" value="UniProtKB-UniRule"/>
</dbReference>
<dbReference type="GO" id="GO:0009143">
    <property type="term" value="P:nucleoside triphosphate catabolic process"/>
    <property type="evidence" value="ECO:0000318"/>
    <property type="project" value="GO_Central"/>
</dbReference>
<dbReference type="GO" id="GO:0009117">
    <property type="term" value="P:nucleotide metabolic process"/>
    <property type="evidence" value="ECO:0007669"/>
    <property type="project" value="UniProtKB-KW"/>
</dbReference>
<dbReference type="CDD" id="cd00515">
    <property type="entry name" value="HAM1"/>
    <property type="match status" value="1"/>
</dbReference>
<dbReference type="FunFam" id="3.90.950.10:FF:000009">
    <property type="entry name" value="Inosine triphosphate pyrophosphatase"/>
    <property type="match status" value="1"/>
</dbReference>
<dbReference type="Gene3D" id="3.90.950.10">
    <property type="match status" value="1"/>
</dbReference>
<dbReference type="HAMAP" id="MF_03148">
    <property type="entry name" value="HAM1_NTPase"/>
    <property type="match status" value="1"/>
</dbReference>
<dbReference type="InterPro" id="IPR027502">
    <property type="entry name" value="ITPase"/>
</dbReference>
<dbReference type="InterPro" id="IPR029001">
    <property type="entry name" value="ITPase-like_fam"/>
</dbReference>
<dbReference type="InterPro" id="IPR002637">
    <property type="entry name" value="RdgB/HAM1"/>
</dbReference>
<dbReference type="NCBIfam" id="TIGR00042">
    <property type="entry name" value="RdgB/HAM1 family non-canonical purine NTP pyrophosphatase"/>
    <property type="match status" value="1"/>
</dbReference>
<dbReference type="PANTHER" id="PTHR11067:SF9">
    <property type="entry name" value="INOSINE TRIPHOSPHATE PYROPHOSPHATASE"/>
    <property type="match status" value="1"/>
</dbReference>
<dbReference type="PANTHER" id="PTHR11067">
    <property type="entry name" value="INOSINE TRIPHOSPHATE PYROPHOSPHATASE/HAM1 PROTEIN"/>
    <property type="match status" value="1"/>
</dbReference>
<dbReference type="Pfam" id="PF01725">
    <property type="entry name" value="Ham1p_like"/>
    <property type="match status" value="1"/>
</dbReference>
<dbReference type="SUPFAM" id="SSF52972">
    <property type="entry name" value="ITPase-like"/>
    <property type="match status" value="1"/>
</dbReference>
<name>ITPA_CANAL</name>
<comment type="function">
    <text evidence="1">Pyrophosphatase that hydrolyzes non-canonical purine nucleotides such as inosine triphosphate (ITP), deoxyinosine triphosphate (dITP) or xanthosine 5'-triphosphate (XTP) to their respective monophosphate derivatives. The enzyme does not distinguish between the deoxy- and ribose forms. Probably excludes non-canonical purines from RNA and DNA precursor pools, thus preventing their incorporation into RNA and DNA and avoiding chromosomal lesions.</text>
</comment>
<comment type="catalytic activity">
    <reaction evidence="1">
        <text>ITP + H2O = IMP + diphosphate + H(+)</text>
        <dbReference type="Rhea" id="RHEA:29399"/>
        <dbReference type="ChEBI" id="CHEBI:15377"/>
        <dbReference type="ChEBI" id="CHEBI:15378"/>
        <dbReference type="ChEBI" id="CHEBI:33019"/>
        <dbReference type="ChEBI" id="CHEBI:58053"/>
        <dbReference type="ChEBI" id="CHEBI:61402"/>
        <dbReference type="EC" id="3.6.1.66"/>
    </reaction>
    <physiologicalReaction direction="left-to-right" evidence="1">
        <dbReference type="Rhea" id="RHEA:29400"/>
    </physiologicalReaction>
</comment>
<comment type="catalytic activity">
    <reaction evidence="1">
        <text>dITP + H2O = dIMP + diphosphate + H(+)</text>
        <dbReference type="Rhea" id="RHEA:28342"/>
        <dbReference type="ChEBI" id="CHEBI:15377"/>
        <dbReference type="ChEBI" id="CHEBI:15378"/>
        <dbReference type="ChEBI" id="CHEBI:33019"/>
        <dbReference type="ChEBI" id="CHEBI:61194"/>
        <dbReference type="ChEBI" id="CHEBI:61382"/>
        <dbReference type="EC" id="3.6.1.66"/>
    </reaction>
    <physiologicalReaction direction="left-to-right" evidence="1">
        <dbReference type="Rhea" id="RHEA:28343"/>
    </physiologicalReaction>
</comment>
<comment type="catalytic activity">
    <reaction evidence="1">
        <text>XTP + H2O = XMP + diphosphate + H(+)</text>
        <dbReference type="Rhea" id="RHEA:28610"/>
        <dbReference type="ChEBI" id="CHEBI:15377"/>
        <dbReference type="ChEBI" id="CHEBI:15378"/>
        <dbReference type="ChEBI" id="CHEBI:33019"/>
        <dbReference type="ChEBI" id="CHEBI:57464"/>
        <dbReference type="ChEBI" id="CHEBI:61314"/>
        <dbReference type="EC" id="3.6.1.66"/>
    </reaction>
    <physiologicalReaction direction="left-to-right" evidence="1">
        <dbReference type="Rhea" id="RHEA:28611"/>
    </physiologicalReaction>
</comment>
<comment type="cofactor">
    <cofactor evidence="1">
        <name>Mg(2+)</name>
        <dbReference type="ChEBI" id="CHEBI:18420"/>
    </cofactor>
    <cofactor evidence="1">
        <name>Mn(2+)</name>
        <dbReference type="ChEBI" id="CHEBI:29035"/>
    </cofactor>
    <text evidence="1">Binds 1 divalent metal cation per subunit; can use either Mg(2+) or Mn(2+).</text>
</comment>
<comment type="subunit">
    <text evidence="1">Homodimer.</text>
</comment>
<comment type="subcellular location">
    <subcellularLocation>
        <location evidence="1">Cytoplasm</location>
    </subcellularLocation>
    <subcellularLocation>
        <location evidence="1">Nucleus</location>
    </subcellularLocation>
</comment>
<comment type="similarity">
    <text evidence="1">Belongs to the HAM1 NTPase family.</text>
</comment>
<proteinExistence type="inferred from homology"/>
<organism>
    <name type="scientific">Candida albicans (strain SC5314 / ATCC MYA-2876)</name>
    <name type="common">Yeast</name>
    <dbReference type="NCBI Taxonomy" id="237561"/>
    <lineage>
        <taxon>Eukaryota</taxon>
        <taxon>Fungi</taxon>
        <taxon>Dikarya</taxon>
        <taxon>Ascomycota</taxon>
        <taxon>Saccharomycotina</taxon>
        <taxon>Pichiomycetes</taxon>
        <taxon>Debaryomycetaceae</taxon>
        <taxon>Candida/Lodderomyces clade</taxon>
        <taxon>Candida</taxon>
    </lineage>
</organism>
<reference key="1">
    <citation type="journal article" date="2004" name="Proc. Natl. Acad. Sci. U.S.A.">
        <title>The diploid genome sequence of Candida albicans.</title>
        <authorList>
            <person name="Jones T."/>
            <person name="Federspiel N.A."/>
            <person name="Chibana H."/>
            <person name="Dungan J."/>
            <person name="Kalman S."/>
            <person name="Magee B.B."/>
            <person name="Newport G."/>
            <person name="Thorstenson Y.R."/>
            <person name="Agabian N."/>
            <person name="Magee P.T."/>
            <person name="Davis R.W."/>
            <person name="Scherer S."/>
        </authorList>
    </citation>
    <scope>NUCLEOTIDE SEQUENCE [LARGE SCALE GENOMIC DNA]</scope>
    <source>
        <strain>SC5314 / ATCC MYA-2876</strain>
    </source>
</reference>
<reference key="2">
    <citation type="journal article" date="2007" name="Genome Biol.">
        <title>Assembly of the Candida albicans genome into sixteen supercontigs aligned on the eight chromosomes.</title>
        <authorList>
            <person name="van het Hoog M."/>
            <person name="Rast T.J."/>
            <person name="Martchenko M."/>
            <person name="Grindle S."/>
            <person name="Dignard D."/>
            <person name="Hogues H."/>
            <person name="Cuomo C."/>
            <person name="Berriman M."/>
            <person name="Scherer S."/>
            <person name="Magee B.B."/>
            <person name="Whiteway M."/>
            <person name="Chibana H."/>
            <person name="Nantel A."/>
            <person name="Magee P.T."/>
        </authorList>
    </citation>
    <scope>GENOME REANNOTATION</scope>
    <source>
        <strain>SC5314 / ATCC MYA-2876</strain>
    </source>
</reference>
<reference key="3">
    <citation type="journal article" date="2013" name="Genome Biol.">
        <title>Assembly of a phased diploid Candida albicans genome facilitates allele-specific measurements and provides a simple model for repeat and indel structure.</title>
        <authorList>
            <person name="Muzzey D."/>
            <person name="Schwartz K."/>
            <person name="Weissman J.S."/>
            <person name="Sherlock G."/>
        </authorList>
    </citation>
    <scope>NUCLEOTIDE SEQUENCE [LARGE SCALE GENOMIC DNA]</scope>
    <scope>GENOME REANNOTATION</scope>
    <source>
        <strain>SC5314 / ATCC MYA-2876</strain>
    </source>
</reference>
<gene>
    <name evidence="1" type="primary">HAM1</name>
    <name type="ordered locus">CAALFM_C503860WA</name>
    <name type="ORF">CaO19.1108</name>
    <name type="ORF">CaO19.8705</name>
</gene>
<evidence type="ECO:0000255" key="1">
    <source>
        <dbReference type="HAMAP-Rule" id="MF_03148"/>
    </source>
</evidence>
<protein>
    <recommendedName>
        <fullName evidence="1">Inosine triphosphate pyrophosphatase</fullName>
        <shortName evidence="1">ITPase</shortName>
        <shortName evidence="1">Inosine triphosphatase</shortName>
        <ecNumber evidence="1">3.6.1.66</ecNumber>
    </recommendedName>
    <alternativeName>
        <fullName evidence="1">Non-canonical purine NTP pyrophosphatase</fullName>
    </alternativeName>
    <alternativeName>
        <fullName evidence="1">Non-standard purine NTP pyrophosphatase</fullName>
    </alternativeName>
    <alternativeName>
        <fullName evidence="1">Nucleoside-triphosphate diphosphatase</fullName>
    </alternativeName>
    <alternativeName>
        <fullName evidence="1">Nucleoside-triphosphate pyrophosphatase</fullName>
        <shortName evidence="1">NTPase</shortName>
    </alternativeName>
    <alternativeName>
        <fullName evidence="1">XTP/dITP diphosphatase</fullName>
    </alternativeName>
</protein>
<accession>Q59N80</accession>
<accession>A0A1D8PNT0</accession>
<feature type="chain" id="PRO_0000413130" description="Inosine triphosphate pyrophosphatase">
    <location>
        <begin position="1"/>
        <end position="202"/>
    </location>
</feature>
<feature type="binding site" evidence="1">
    <location>
        <begin position="8"/>
        <end position="13"/>
    </location>
    <ligand>
        <name>ITP</name>
        <dbReference type="ChEBI" id="CHEBI:61402"/>
    </ligand>
</feature>
<feature type="binding site" evidence="1">
    <location>
        <position position="55"/>
    </location>
    <ligand>
        <name>Mg(2+)</name>
        <dbReference type="ChEBI" id="CHEBI:18420"/>
    </ligand>
</feature>
<feature type="binding site" evidence="1">
    <location>
        <position position="67"/>
    </location>
    <ligand>
        <name>ITP</name>
        <dbReference type="ChEBI" id="CHEBI:61402"/>
    </ligand>
</feature>
<feature type="binding site" evidence="1">
    <location>
        <begin position="83"/>
        <end position="84"/>
    </location>
    <ligand>
        <name>ITP</name>
        <dbReference type="ChEBI" id="CHEBI:61402"/>
    </ligand>
</feature>
<feature type="binding site" evidence="1">
    <location>
        <position position="100"/>
    </location>
    <ligand>
        <name>ITP</name>
        <dbReference type="ChEBI" id="CHEBI:61402"/>
    </ligand>
</feature>
<feature type="binding site" evidence="1">
    <location>
        <begin position="159"/>
        <end position="162"/>
    </location>
    <ligand>
        <name>ITP</name>
        <dbReference type="ChEBI" id="CHEBI:61402"/>
    </ligand>
</feature>
<feature type="binding site" evidence="1">
    <location>
        <position position="182"/>
    </location>
    <ligand>
        <name>ITP</name>
        <dbReference type="ChEBI" id="CHEBI:61402"/>
    </ligand>
</feature>
<feature type="binding site" evidence="1">
    <location>
        <begin position="187"/>
        <end position="188"/>
    </location>
    <ligand>
        <name>ITP</name>
        <dbReference type="ChEBI" id="CHEBI:61402"/>
    </ligand>
</feature>
<keyword id="KW-0963">Cytoplasm</keyword>
<keyword id="KW-0378">Hydrolase</keyword>
<keyword id="KW-0460">Magnesium</keyword>
<keyword id="KW-0464">Manganese</keyword>
<keyword id="KW-0479">Metal-binding</keyword>
<keyword id="KW-0546">Nucleotide metabolism</keyword>
<keyword id="KW-0547">Nucleotide-binding</keyword>
<keyword id="KW-0539">Nucleus</keyword>
<keyword id="KW-1185">Reference proteome</keyword>
<sequence>MSTITFVTGNANKLKEVIAILASSETDSSSSSSSLSSSNKVGKFTITNQSVDLDEVQGTIEQVTIHKAQAAAKVIDGPVLVEDTCLGFNAFNDLPGPYIKWFVQSIGLTGLVKMLIGFEDKSAKAICTFGYCEGPDKEVKIFQGITEGKIVDSRGPTNFGWDSIFQPNGFEQTYAEMDKKVKNSISHRYKALDKVRDYLLSQ</sequence>